<reference key="1">
    <citation type="journal article" date="2000" name="Mol. Gen. Genet.">
        <title>Complete nucleotide sequence of the Oenothera elata plastid chromosome, representing plastome I of the five distinguishable Euoenothera plastomes.</title>
        <authorList>
            <person name="Hupfer H."/>
            <person name="Swiatek M."/>
            <person name="Hornung S."/>
            <person name="Herrmann R.G."/>
            <person name="Maier R.M."/>
            <person name="Chiu W.-L."/>
            <person name="Sears B."/>
        </authorList>
    </citation>
    <scope>NUCLEOTIDE SEQUENCE [LARGE SCALE GENOMIC DNA]</scope>
    <source>
        <strain>cv. Johansen</strain>
    </source>
</reference>
<reference key="2">
    <citation type="journal article" date="2008" name="Nucleic Acids Res.">
        <title>The complete nucleotide sequences of the five genetically distinct plastid genomes of Oenothera, subsection Oenothera: I. Sequence evaluation and plastome evolution.</title>
        <authorList>
            <person name="Greiner S."/>
            <person name="Wang X."/>
            <person name="Rauwolf U."/>
            <person name="Silber M.V."/>
            <person name="Mayer K."/>
            <person name="Meurer J."/>
            <person name="Haberer G."/>
            <person name="Herrmann R.G."/>
        </authorList>
    </citation>
    <scope>SEQUENCE REVISION TO 75; 189 AND 355</scope>
</reference>
<geneLocation type="chloroplast"/>
<comment type="function">
    <text evidence="1">NDH shuttles electrons from NAD(P)H:plastoquinone, via FMN and iron-sulfur (Fe-S) centers, to quinones in the photosynthetic chain and possibly in a chloroplast respiratory chain. The immediate electron acceptor for the enzyme in this species is believed to be plastoquinone. Couples the redox reaction to proton translocation, and thus conserves the redox energy in a proton gradient.</text>
</comment>
<comment type="catalytic activity">
    <reaction evidence="1">
        <text>a plastoquinone + NADH + (n+1) H(+)(in) = a plastoquinol + NAD(+) + n H(+)(out)</text>
        <dbReference type="Rhea" id="RHEA:42608"/>
        <dbReference type="Rhea" id="RHEA-COMP:9561"/>
        <dbReference type="Rhea" id="RHEA-COMP:9562"/>
        <dbReference type="ChEBI" id="CHEBI:15378"/>
        <dbReference type="ChEBI" id="CHEBI:17757"/>
        <dbReference type="ChEBI" id="CHEBI:57540"/>
        <dbReference type="ChEBI" id="CHEBI:57945"/>
        <dbReference type="ChEBI" id="CHEBI:62192"/>
    </reaction>
</comment>
<comment type="catalytic activity">
    <reaction evidence="1">
        <text>a plastoquinone + NADPH + (n+1) H(+)(in) = a plastoquinol + NADP(+) + n H(+)(out)</text>
        <dbReference type="Rhea" id="RHEA:42612"/>
        <dbReference type="Rhea" id="RHEA-COMP:9561"/>
        <dbReference type="Rhea" id="RHEA-COMP:9562"/>
        <dbReference type="ChEBI" id="CHEBI:15378"/>
        <dbReference type="ChEBI" id="CHEBI:17757"/>
        <dbReference type="ChEBI" id="CHEBI:57783"/>
        <dbReference type="ChEBI" id="CHEBI:58349"/>
        <dbReference type="ChEBI" id="CHEBI:62192"/>
    </reaction>
</comment>
<comment type="subunit">
    <text evidence="1">NDH is composed of at least 16 different subunits, 5 of which are encoded in the nucleus.</text>
</comment>
<comment type="subcellular location">
    <subcellularLocation>
        <location evidence="1">Plastid</location>
        <location evidence="1">Chloroplast thylakoid membrane</location>
        <topology evidence="1">Multi-pass membrane protein</topology>
    </subcellularLocation>
</comment>
<comment type="similarity">
    <text evidence="1">Belongs to the complex I subunit 1 family.</text>
</comment>
<accession>Q9MTH7</accession>
<sequence>MIIDTTAVQDMNSFSRLQSLKEVSGIIWMLVPILSLVLGITLGVLVIVWLEREISAGIQQRIGPEYAGPMGILQALADGIKLIFKENLLPSRGDTRLFSIGPSIAVISILLSYSVIPFSSHLVLSDLNIGVFLWIAVSSIAPIGLLMSGYGSNNKYSFLGGLRAAAQSISYEIPLTLCLLSISLLSNSSSTVDIVEAQSKYGLWGWNLWRQPIGFLVFLISSLAECERLPFDLPEAEEELVAGYQTEYSGIKFGLFYVASYLNLLVSSLFVTVLYLGGWNISISYIFVPGLFEITKVGRVFGTTIGIFTTLAKTYLFLFISITTRWTLPRLRMDQLLNLGWKFLLPISLGNLLLTTSSQLLSL</sequence>
<dbReference type="EC" id="7.1.1.-" evidence="1"/>
<dbReference type="EMBL" id="AJ271079">
    <property type="protein sequence ID" value="CAB67225.2"/>
    <property type="molecule type" value="Genomic_DNA"/>
</dbReference>
<dbReference type="RefSeq" id="NP_084756.2">
    <property type="nucleotide sequence ID" value="NC_002693.2"/>
</dbReference>
<dbReference type="SMR" id="Q9MTH7"/>
<dbReference type="GeneID" id="802742"/>
<dbReference type="GO" id="GO:0009535">
    <property type="term" value="C:chloroplast thylakoid membrane"/>
    <property type="evidence" value="ECO:0007669"/>
    <property type="project" value="UniProtKB-SubCell"/>
</dbReference>
<dbReference type="GO" id="GO:0003954">
    <property type="term" value="F:NADH dehydrogenase activity"/>
    <property type="evidence" value="ECO:0007669"/>
    <property type="project" value="TreeGrafter"/>
</dbReference>
<dbReference type="GO" id="GO:0016655">
    <property type="term" value="F:oxidoreductase activity, acting on NAD(P)H, quinone or similar compound as acceptor"/>
    <property type="evidence" value="ECO:0007669"/>
    <property type="project" value="UniProtKB-UniRule"/>
</dbReference>
<dbReference type="GO" id="GO:0048038">
    <property type="term" value="F:quinone binding"/>
    <property type="evidence" value="ECO:0007669"/>
    <property type="project" value="UniProtKB-KW"/>
</dbReference>
<dbReference type="GO" id="GO:0009060">
    <property type="term" value="P:aerobic respiration"/>
    <property type="evidence" value="ECO:0007669"/>
    <property type="project" value="TreeGrafter"/>
</dbReference>
<dbReference type="GO" id="GO:0019684">
    <property type="term" value="P:photosynthesis, light reaction"/>
    <property type="evidence" value="ECO:0007669"/>
    <property type="project" value="UniProtKB-UniRule"/>
</dbReference>
<dbReference type="HAMAP" id="MF_01350">
    <property type="entry name" value="NDH1_NuoH"/>
    <property type="match status" value="1"/>
</dbReference>
<dbReference type="InterPro" id="IPR001694">
    <property type="entry name" value="NADH_UbQ_OxRdtase_su1/FPO"/>
</dbReference>
<dbReference type="InterPro" id="IPR018086">
    <property type="entry name" value="NADH_UbQ_OxRdtase_su1_CS"/>
</dbReference>
<dbReference type="NCBIfam" id="NF004741">
    <property type="entry name" value="PRK06076.1-2"/>
    <property type="match status" value="1"/>
</dbReference>
<dbReference type="PANTHER" id="PTHR11432">
    <property type="entry name" value="NADH DEHYDROGENASE SUBUNIT 1"/>
    <property type="match status" value="1"/>
</dbReference>
<dbReference type="PANTHER" id="PTHR11432:SF3">
    <property type="entry name" value="NADH-UBIQUINONE OXIDOREDUCTASE CHAIN 1"/>
    <property type="match status" value="1"/>
</dbReference>
<dbReference type="Pfam" id="PF00146">
    <property type="entry name" value="NADHdh"/>
    <property type="match status" value="1"/>
</dbReference>
<dbReference type="PROSITE" id="PS00667">
    <property type="entry name" value="COMPLEX1_ND1_1"/>
    <property type="match status" value="1"/>
</dbReference>
<dbReference type="PROSITE" id="PS00668">
    <property type="entry name" value="COMPLEX1_ND1_2"/>
    <property type="match status" value="1"/>
</dbReference>
<proteinExistence type="inferred from homology"/>
<protein>
    <recommendedName>
        <fullName evidence="1">NAD(P)H-quinone oxidoreductase subunit 1, chloroplastic</fullName>
        <ecNumber evidence="1">7.1.1.-</ecNumber>
    </recommendedName>
    <alternativeName>
        <fullName evidence="1">NAD(P)H dehydrogenase subunit 1</fullName>
        <shortName evidence="1">NDH subunit 1</shortName>
    </alternativeName>
    <alternativeName>
        <fullName evidence="1">NADH-plastoquinone oxidoreductase subunit 1</fullName>
    </alternativeName>
</protein>
<keyword id="KW-0150">Chloroplast</keyword>
<keyword id="KW-0472">Membrane</keyword>
<keyword id="KW-0520">NAD</keyword>
<keyword id="KW-0521">NADP</keyword>
<keyword id="KW-0934">Plastid</keyword>
<keyword id="KW-0618">Plastoquinone</keyword>
<keyword id="KW-0874">Quinone</keyword>
<keyword id="KW-0793">Thylakoid</keyword>
<keyword id="KW-1278">Translocase</keyword>
<keyword id="KW-0812">Transmembrane</keyword>
<keyword id="KW-1133">Transmembrane helix</keyword>
<gene>
    <name evidence="1" type="primary">ndhA</name>
</gene>
<organism>
    <name type="scientific">Oenothera elata subsp. hookeri</name>
    <name type="common">Hooker's evening primrose</name>
    <name type="synonym">Oenothera hookeri</name>
    <dbReference type="NCBI Taxonomy" id="85636"/>
    <lineage>
        <taxon>Eukaryota</taxon>
        <taxon>Viridiplantae</taxon>
        <taxon>Streptophyta</taxon>
        <taxon>Embryophyta</taxon>
        <taxon>Tracheophyta</taxon>
        <taxon>Spermatophyta</taxon>
        <taxon>Magnoliopsida</taxon>
        <taxon>eudicotyledons</taxon>
        <taxon>Gunneridae</taxon>
        <taxon>Pentapetalae</taxon>
        <taxon>rosids</taxon>
        <taxon>malvids</taxon>
        <taxon>Myrtales</taxon>
        <taxon>Onagraceae</taxon>
        <taxon>Onagroideae</taxon>
        <taxon>Onagreae</taxon>
        <taxon>Oenothera</taxon>
    </lineage>
</organism>
<evidence type="ECO:0000255" key="1">
    <source>
        <dbReference type="HAMAP-Rule" id="MF_01350"/>
    </source>
</evidence>
<feature type="chain" id="PRO_0000117512" description="NAD(P)H-quinone oxidoreductase subunit 1, chloroplastic">
    <location>
        <begin position="1"/>
        <end position="363"/>
    </location>
</feature>
<feature type="transmembrane region" description="Helical" evidence="1">
    <location>
        <begin position="30"/>
        <end position="50"/>
    </location>
</feature>
<feature type="transmembrane region" description="Helical" evidence="1">
    <location>
        <begin position="98"/>
        <end position="118"/>
    </location>
</feature>
<feature type="transmembrane region" description="Helical" evidence="1">
    <location>
        <begin position="129"/>
        <end position="149"/>
    </location>
</feature>
<feature type="transmembrane region" description="Helical" evidence="1">
    <location>
        <begin position="165"/>
        <end position="185"/>
    </location>
</feature>
<feature type="transmembrane region" description="Helical" evidence="1">
    <location>
        <begin position="203"/>
        <end position="223"/>
    </location>
</feature>
<feature type="transmembrane region" description="Helical" evidence="1">
    <location>
        <begin position="248"/>
        <end position="268"/>
    </location>
</feature>
<feature type="transmembrane region" description="Helical" evidence="1">
    <location>
        <begin position="269"/>
        <end position="289"/>
    </location>
</feature>
<feature type="transmembrane region" description="Helical" evidence="1">
    <location>
        <begin position="300"/>
        <end position="320"/>
    </location>
</feature>
<feature type="transmembrane region" description="Helical" evidence="1">
    <location>
        <begin position="334"/>
        <end position="354"/>
    </location>
</feature>
<name>NU1C_OENEH</name>